<proteinExistence type="inferred from homology"/>
<protein>
    <recommendedName>
        <fullName evidence="1">Phospho-N-acetylmuramoyl-pentapeptide-transferase</fullName>
        <ecNumber evidence="1">2.7.8.13</ecNumber>
    </recommendedName>
    <alternativeName>
        <fullName evidence="1">UDP-MurNAc-pentapeptide phosphotransferase</fullName>
    </alternativeName>
</protein>
<reference key="1">
    <citation type="submission" date="2009-06" db="EMBL/GenBank/DDBJ databases">
        <title>Complete sequence of Thermotogales bacterium TBF 19.5.1.</title>
        <authorList>
            <consortium name="US DOE Joint Genome Institute"/>
            <person name="Lucas S."/>
            <person name="Copeland A."/>
            <person name="Lapidus A."/>
            <person name="Glavina del Rio T."/>
            <person name="Tice H."/>
            <person name="Bruce D."/>
            <person name="Goodwin L."/>
            <person name="Pitluck S."/>
            <person name="Chertkov O."/>
            <person name="Brettin T."/>
            <person name="Detter J.C."/>
            <person name="Han C."/>
            <person name="Schmutz J."/>
            <person name="Larimer F."/>
            <person name="Land M."/>
            <person name="Hauser L."/>
            <person name="Kyrpides N."/>
            <person name="Ovchinnikova G."/>
            <person name="Noll K."/>
        </authorList>
    </citation>
    <scope>NUCLEOTIDE SEQUENCE [LARGE SCALE GENOMIC DNA]</scope>
    <source>
        <strain>ATCC BAA-1733 / DSM 21960 / TBF 19.5.1</strain>
    </source>
</reference>
<keyword id="KW-0131">Cell cycle</keyword>
<keyword id="KW-0132">Cell division</keyword>
<keyword id="KW-0997">Cell inner membrane</keyword>
<keyword id="KW-1003">Cell membrane</keyword>
<keyword id="KW-0133">Cell shape</keyword>
<keyword id="KW-0961">Cell wall biogenesis/degradation</keyword>
<keyword id="KW-0460">Magnesium</keyword>
<keyword id="KW-0472">Membrane</keyword>
<keyword id="KW-0479">Metal-binding</keyword>
<keyword id="KW-0573">Peptidoglycan synthesis</keyword>
<keyword id="KW-1185">Reference proteome</keyword>
<keyword id="KW-0808">Transferase</keyword>
<keyword id="KW-0812">Transmembrane</keyword>
<keyword id="KW-1133">Transmembrane helix</keyword>
<accession>C5CDR2</accession>
<organism>
    <name type="scientific">Kosmotoga olearia (strain ATCC BAA-1733 / DSM 21960 / TBF 19.5.1)</name>
    <dbReference type="NCBI Taxonomy" id="521045"/>
    <lineage>
        <taxon>Bacteria</taxon>
        <taxon>Thermotogati</taxon>
        <taxon>Thermotogota</taxon>
        <taxon>Thermotogae</taxon>
        <taxon>Kosmotogales</taxon>
        <taxon>Kosmotogaceae</taxon>
        <taxon>Kosmotoga</taxon>
    </lineage>
</organism>
<dbReference type="EC" id="2.7.8.13" evidence="1"/>
<dbReference type="EMBL" id="CP001634">
    <property type="protein sequence ID" value="ACR80074.1"/>
    <property type="molecule type" value="Genomic_DNA"/>
</dbReference>
<dbReference type="RefSeq" id="WP_015868721.1">
    <property type="nucleotide sequence ID" value="NC_012785.1"/>
</dbReference>
<dbReference type="SMR" id="C5CDR2"/>
<dbReference type="STRING" id="521045.Kole_1381"/>
<dbReference type="KEGG" id="kol:Kole_1381"/>
<dbReference type="eggNOG" id="COG0472">
    <property type="taxonomic scope" value="Bacteria"/>
</dbReference>
<dbReference type="HOGENOM" id="CLU_023982_0_0_0"/>
<dbReference type="OrthoDB" id="9805475at2"/>
<dbReference type="UniPathway" id="UPA00219"/>
<dbReference type="Proteomes" id="UP000002382">
    <property type="component" value="Chromosome"/>
</dbReference>
<dbReference type="GO" id="GO:0005886">
    <property type="term" value="C:plasma membrane"/>
    <property type="evidence" value="ECO:0007669"/>
    <property type="project" value="UniProtKB-SubCell"/>
</dbReference>
<dbReference type="GO" id="GO:0046872">
    <property type="term" value="F:metal ion binding"/>
    <property type="evidence" value="ECO:0007669"/>
    <property type="project" value="UniProtKB-KW"/>
</dbReference>
<dbReference type="GO" id="GO:0008963">
    <property type="term" value="F:phospho-N-acetylmuramoyl-pentapeptide-transferase activity"/>
    <property type="evidence" value="ECO:0007669"/>
    <property type="project" value="UniProtKB-UniRule"/>
</dbReference>
<dbReference type="GO" id="GO:0051992">
    <property type="term" value="F:UDP-N-acetylmuramoyl-L-alanyl-D-glutamyl-meso-2,6-diaminopimelyl-D-alanyl-D-alanine:undecaprenyl-phosphate transferase activity"/>
    <property type="evidence" value="ECO:0007669"/>
    <property type="project" value="RHEA"/>
</dbReference>
<dbReference type="GO" id="GO:0051301">
    <property type="term" value="P:cell division"/>
    <property type="evidence" value="ECO:0007669"/>
    <property type="project" value="UniProtKB-KW"/>
</dbReference>
<dbReference type="GO" id="GO:0071555">
    <property type="term" value="P:cell wall organization"/>
    <property type="evidence" value="ECO:0007669"/>
    <property type="project" value="UniProtKB-KW"/>
</dbReference>
<dbReference type="GO" id="GO:0009252">
    <property type="term" value="P:peptidoglycan biosynthetic process"/>
    <property type="evidence" value="ECO:0007669"/>
    <property type="project" value="UniProtKB-UniRule"/>
</dbReference>
<dbReference type="GO" id="GO:0008360">
    <property type="term" value="P:regulation of cell shape"/>
    <property type="evidence" value="ECO:0007669"/>
    <property type="project" value="UniProtKB-KW"/>
</dbReference>
<dbReference type="CDD" id="cd06852">
    <property type="entry name" value="GT_MraY"/>
    <property type="match status" value="1"/>
</dbReference>
<dbReference type="HAMAP" id="MF_00038">
    <property type="entry name" value="MraY"/>
    <property type="match status" value="1"/>
</dbReference>
<dbReference type="InterPro" id="IPR000715">
    <property type="entry name" value="Glycosyl_transferase_4"/>
</dbReference>
<dbReference type="InterPro" id="IPR003524">
    <property type="entry name" value="PNAcMuramoyl-5peptid_Trfase"/>
</dbReference>
<dbReference type="InterPro" id="IPR018480">
    <property type="entry name" value="PNAcMuramoyl-5peptid_Trfase_CS"/>
</dbReference>
<dbReference type="NCBIfam" id="TIGR00445">
    <property type="entry name" value="mraY"/>
    <property type="match status" value="1"/>
</dbReference>
<dbReference type="PANTHER" id="PTHR22926">
    <property type="entry name" value="PHOSPHO-N-ACETYLMURAMOYL-PENTAPEPTIDE-TRANSFERASE"/>
    <property type="match status" value="1"/>
</dbReference>
<dbReference type="PANTHER" id="PTHR22926:SF5">
    <property type="entry name" value="PHOSPHO-N-ACETYLMURAMOYL-PENTAPEPTIDE-TRANSFERASE HOMOLOG"/>
    <property type="match status" value="1"/>
</dbReference>
<dbReference type="Pfam" id="PF00953">
    <property type="entry name" value="Glycos_transf_4"/>
    <property type="match status" value="1"/>
</dbReference>
<dbReference type="PROSITE" id="PS01347">
    <property type="entry name" value="MRAY_1"/>
    <property type="match status" value="1"/>
</dbReference>
<dbReference type="PROSITE" id="PS01348">
    <property type="entry name" value="MRAY_2"/>
    <property type="match status" value="1"/>
</dbReference>
<sequence length="311" mass="34839">MENNVIVFFLSFLSSVVFIEGFKRFQKKLRIGQYIREEGPDLHNYKTGTPTAAGLVFIPIFIAVLLNFNRGPESFLIAFSALSYGLIGAIDDFMKIKRKNASGITAVQKLFMQFTAAFIIVYFIQQINPHTYLIVPFSGYKLDLGWFYYLLSSVVIVGVSNAVNLTDGVDGLAGFVFIGSIVPLLIVGYQSVVYLSLIGLLMGFLWHNWHPASIFMGDAGSLALGGILATSFALNGLELFLIFFGFIFLLETLSVIIQVTSFKFRGKRVFRMSPIHHHFELLGWKEEKIAFRFSTLALLVSLLGIIGWREL</sequence>
<name>MRAY_KOSOT</name>
<evidence type="ECO:0000255" key="1">
    <source>
        <dbReference type="HAMAP-Rule" id="MF_00038"/>
    </source>
</evidence>
<comment type="function">
    <text evidence="1">Catalyzes the initial step of the lipid cycle reactions in the biosynthesis of the cell wall peptidoglycan: transfers peptidoglycan precursor phospho-MurNAc-pentapeptide from UDP-MurNAc-pentapeptide onto the lipid carrier undecaprenyl phosphate, yielding undecaprenyl-pyrophosphoryl-MurNAc-pentapeptide, known as lipid I.</text>
</comment>
<comment type="catalytic activity">
    <reaction evidence="1">
        <text>UDP-N-acetyl-alpha-D-muramoyl-L-alanyl-gamma-D-glutamyl-meso-2,6-diaminopimeloyl-D-alanyl-D-alanine + di-trans,octa-cis-undecaprenyl phosphate = di-trans,octa-cis-undecaprenyl diphospho-N-acetyl-alpha-D-muramoyl-L-alanyl-D-glutamyl-meso-2,6-diaminopimeloyl-D-alanyl-D-alanine + UMP</text>
        <dbReference type="Rhea" id="RHEA:28386"/>
        <dbReference type="ChEBI" id="CHEBI:57865"/>
        <dbReference type="ChEBI" id="CHEBI:60392"/>
        <dbReference type="ChEBI" id="CHEBI:61386"/>
        <dbReference type="ChEBI" id="CHEBI:61387"/>
        <dbReference type="EC" id="2.7.8.13"/>
    </reaction>
</comment>
<comment type="cofactor">
    <cofactor evidence="1">
        <name>Mg(2+)</name>
        <dbReference type="ChEBI" id="CHEBI:18420"/>
    </cofactor>
</comment>
<comment type="pathway">
    <text evidence="1">Cell wall biogenesis; peptidoglycan biosynthesis.</text>
</comment>
<comment type="subcellular location">
    <subcellularLocation>
        <location evidence="1">Cell inner membrane</location>
        <topology evidence="1">Multi-pass membrane protein</topology>
    </subcellularLocation>
</comment>
<comment type="similarity">
    <text evidence="1">Belongs to the glycosyltransferase 4 family. MraY subfamily.</text>
</comment>
<gene>
    <name evidence="1" type="primary">mraY</name>
    <name type="ordered locus">Kole_1381</name>
</gene>
<feature type="chain" id="PRO_1000202071" description="Phospho-N-acetylmuramoyl-pentapeptide-transferase">
    <location>
        <begin position="1"/>
        <end position="311"/>
    </location>
</feature>
<feature type="transmembrane region" description="Helical" evidence="1">
    <location>
        <begin position="2"/>
        <end position="22"/>
    </location>
</feature>
<feature type="transmembrane region" description="Helical" evidence="1">
    <location>
        <begin position="48"/>
        <end position="68"/>
    </location>
</feature>
<feature type="transmembrane region" description="Helical" evidence="1">
    <location>
        <begin position="74"/>
        <end position="94"/>
    </location>
</feature>
<feature type="transmembrane region" description="Helical" evidence="1">
    <location>
        <begin position="104"/>
        <end position="124"/>
    </location>
</feature>
<feature type="transmembrane region" description="Helical" evidence="1">
    <location>
        <begin position="144"/>
        <end position="164"/>
    </location>
</feature>
<feature type="transmembrane region" description="Helical" evidence="1">
    <location>
        <begin position="168"/>
        <end position="188"/>
    </location>
</feature>
<feature type="transmembrane region" description="Helical" evidence="1">
    <location>
        <begin position="192"/>
        <end position="212"/>
    </location>
</feature>
<feature type="transmembrane region" description="Helical" evidence="1">
    <location>
        <begin position="214"/>
        <end position="234"/>
    </location>
</feature>
<feature type="transmembrane region" description="Helical" evidence="1">
    <location>
        <begin position="237"/>
        <end position="257"/>
    </location>
</feature>
<feature type="transmembrane region" description="Helical" evidence="1">
    <location>
        <begin position="288"/>
        <end position="308"/>
    </location>
</feature>